<sequence>MRKNRILALFVLSLGLLSFMVTPVSAASKGNLLSPDRILTVAHRGASGYVPEHTILSYETAQKMKADFIELDLQMTKDGKLIVMHDEKLDRTTNGMGWVKDHTLADIKKLDAGSWFNEAYPEKAKPQYVGLKVPTLEEVLDRFGKHANYYIETKSPDTYPGMEEKLIASLQKHKLLGKHSKPGQVIIQSFSKESLVKVHQLQPNLPTVQLLEAKQMASMTDAALEEIKTYAVGAGPDYKALNQENVRMIRSHGLLLHPYTVNNEADMHRLLDWGVTGVFTNYPDLFHKVKKGY</sequence>
<feature type="signal peptide" evidence="1">
    <location>
        <begin position="1"/>
        <end position="26"/>
    </location>
</feature>
<feature type="chain" id="PRO_0000200573" description="Glycerophosphodiester phosphodiesterase">
    <location>
        <begin position="27"/>
        <end position="293"/>
    </location>
</feature>
<feature type="domain" description="GP-PDE" evidence="2">
    <location>
        <begin position="38"/>
        <end position="290"/>
    </location>
</feature>
<feature type="active site" description="Proton acceptor" evidence="7">
    <location>
        <position position="43"/>
    </location>
</feature>
<feature type="active site" description="Proton donor" evidence="7">
    <location>
        <position position="85"/>
    </location>
</feature>
<feature type="binding site" evidence="3 9 10">
    <location>
        <position position="43"/>
    </location>
    <ligand>
        <name>sn-glycerol 3-phosphate</name>
        <dbReference type="ChEBI" id="CHEBI:57597"/>
    </ligand>
</feature>
<feature type="binding site" evidence="3 9 10">
    <location>
        <position position="44"/>
    </location>
    <ligand>
        <name>sn-glycerol 3-phosphate</name>
        <dbReference type="ChEBI" id="CHEBI:57597"/>
    </ligand>
</feature>
<feature type="binding site" evidence="3 9 10">
    <location>
        <position position="70"/>
    </location>
    <ligand>
        <name>Ca(2+)</name>
        <dbReference type="ChEBI" id="CHEBI:29108"/>
    </ligand>
</feature>
<feature type="binding site" evidence="3 9 10">
    <location>
        <position position="70"/>
    </location>
    <ligand>
        <name>sn-glycerol 3-phosphate</name>
        <dbReference type="ChEBI" id="CHEBI:57597"/>
    </ligand>
</feature>
<feature type="binding site" evidence="3 9 10">
    <location>
        <position position="72"/>
    </location>
    <ligand>
        <name>Ca(2+)</name>
        <dbReference type="ChEBI" id="CHEBI:29108"/>
    </ligand>
</feature>
<feature type="binding site" evidence="3 9 10">
    <location>
        <position position="85"/>
    </location>
    <ligand>
        <name>sn-glycerol 3-phosphate</name>
        <dbReference type="ChEBI" id="CHEBI:57597"/>
    </ligand>
</feature>
<feature type="binding site" evidence="3 9 10">
    <location>
        <position position="152"/>
    </location>
    <ligand>
        <name>Ca(2+)</name>
        <dbReference type="ChEBI" id="CHEBI:29108"/>
    </ligand>
</feature>
<feature type="binding site" evidence="3 9 10">
    <location>
        <position position="152"/>
    </location>
    <ligand>
        <name>sn-glycerol 3-phosphate</name>
        <dbReference type="ChEBI" id="CHEBI:57597"/>
    </ligand>
</feature>
<feature type="binding site" evidence="3 9 10">
    <location>
        <position position="188"/>
    </location>
    <ligand>
        <name>sn-glycerol 3-phosphate</name>
        <dbReference type="ChEBI" id="CHEBI:57597"/>
    </ligand>
</feature>
<feature type="strand" evidence="11">
    <location>
        <begin position="39"/>
        <end position="42"/>
    </location>
</feature>
<feature type="turn" evidence="11">
    <location>
        <begin position="43"/>
        <end position="49"/>
    </location>
</feature>
<feature type="helix" evidence="11">
    <location>
        <begin position="55"/>
        <end position="63"/>
    </location>
</feature>
<feature type="strand" evidence="11">
    <location>
        <begin position="67"/>
        <end position="75"/>
    </location>
</feature>
<feature type="strand" evidence="11">
    <location>
        <begin position="81"/>
        <end position="83"/>
    </location>
</feature>
<feature type="strand" evidence="11">
    <location>
        <begin position="85"/>
        <end position="89"/>
    </location>
</feature>
<feature type="turn" evidence="11">
    <location>
        <begin position="90"/>
        <end position="92"/>
    </location>
</feature>
<feature type="helix" evidence="11">
    <location>
        <begin position="99"/>
        <end position="101"/>
    </location>
</feature>
<feature type="helix" evidence="11">
    <location>
        <begin position="104"/>
        <end position="107"/>
    </location>
</feature>
<feature type="helix" evidence="11">
    <location>
        <begin position="114"/>
        <end position="119"/>
    </location>
</feature>
<feature type="helix" evidence="11">
    <location>
        <begin position="121"/>
        <end position="123"/>
    </location>
</feature>
<feature type="helix" evidence="11">
    <location>
        <begin position="126"/>
        <end position="128"/>
    </location>
</feature>
<feature type="helix" evidence="11">
    <location>
        <begin position="136"/>
        <end position="143"/>
    </location>
</feature>
<feature type="helix" evidence="11">
    <location>
        <begin position="144"/>
        <end position="146"/>
    </location>
</feature>
<feature type="strand" evidence="11">
    <location>
        <begin position="149"/>
        <end position="153"/>
    </location>
</feature>
<feature type="helix" evidence="11">
    <location>
        <begin position="156"/>
        <end position="158"/>
    </location>
</feature>
<feature type="helix" evidence="11">
    <location>
        <begin position="162"/>
        <end position="172"/>
    </location>
</feature>
<feature type="strand" evidence="11">
    <location>
        <begin position="177"/>
        <end position="180"/>
    </location>
</feature>
<feature type="strand" evidence="11">
    <location>
        <begin position="184"/>
        <end position="190"/>
    </location>
</feature>
<feature type="helix" evidence="11">
    <location>
        <begin position="192"/>
        <end position="201"/>
    </location>
</feature>
<feature type="strand" evidence="11">
    <location>
        <begin position="207"/>
        <end position="211"/>
    </location>
</feature>
<feature type="helix" evidence="11">
    <location>
        <begin position="213"/>
        <end position="217"/>
    </location>
</feature>
<feature type="helix" evidence="11">
    <location>
        <begin position="221"/>
        <end position="228"/>
    </location>
</feature>
<feature type="strand" evidence="11">
    <location>
        <begin position="232"/>
        <end position="237"/>
    </location>
</feature>
<feature type="helix" evidence="11">
    <location>
        <begin position="238"/>
        <end position="240"/>
    </location>
</feature>
<feature type="helix" evidence="11">
    <location>
        <begin position="243"/>
        <end position="251"/>
    </location>
</feature>
<feature type="helix" evidence="11">
    <location>
        <begin position="264"/>
        <end position="273"/>
    </location>
</feature>
<feature type="strand" evidence="11">
    <location>
        <begin position="277"/>
        <end position="281"/>
    </location>
</feature>
<feature type="helix" evidence="11">
    <location>
        <begin position="283"/>
        <end position="290"/>
    </location>
</feature>
<comment type="function">
    <text evidence="3">Glycerophosphodiester phosphodiesterase hydrolyzes glycerophosphodiesters into glycerol-3-phosphate (G3P) and the corresponding alcohol (PubMed:27780866). Involved in wall teichoic acid (WTA) metabolism during phosphate starvation (PubMed:27780866). Catalyzes the degradation of WTA, enabling the utilization of WTA as a phosphate reserve under limiting conditions (PubMed:27780866). Is highly selective for the poly(gylcerol phosphate) WTA backbone and catalyzes exolytic cleavage of individual monomer units (PubMed:27780866). In vitro is active toward the WTA oligomer mimics glycerophosphoglycerol (GPG) and bis-glycerophosphoglycerol (bGPG) (PubMed:27780866).</text>
</comment>
<comment type="catalytic activity">
    <reaction evidence="3">
        <text>a sn-glycero-3-phosphodiester + H2O = an alcohol + sn-glycerol 3-phosphate + H(+)</text>
        <dbReference type="Rhea" id="RHEA:12969"/>
        <dbReference type="ChEBI" id="CHEBI:15377"/>
        <dbReference type="ChEBI" id="CHEBI:15378"/>
        <dbReference type="ChEBI" id="CHEBI:30879"/>
        <dbReference type="ChEBI" id="CHEBI:57597"/>
        <dbReference type="ChEBI" id="CHEBI:83408"/>
        <dbReference type="EC" id="3.1.4.46"/>
    </reaction>
</comment>
<comment type="cofactor">
    <cofactor evidence="3">
        <name>Ca(2+)</name>
        <dbReference type="ChEBI" id="CHEBI:29108"/>
    </cofactor>
    <text evidence="3">Binds 1 Ca(2+) ion per subunit.</text>
</comment>
<comment type="biophysicochemical properties">
    <kinetics>
        <KM evidence="3">0.96 mM for glycerophosphoglycerol</KM>
        <KM evidence="3">1.4 mM for bis-glycerophosphoglycerol</KM>
        <text evidence="3">kcat is 1275 min(-1) with glycerophosphoglycerol as substrate. kcat is 1517 min(-1) with bis-glycerophosphoglycerol as substrate.</text>
    </kinetics>
</comment>
<comment type="subcellular location">
    <subcellularLocation>
        <location evidence="7">Secreted</location>
    </subcellularLocation>
</comment>
<comment type="induction">
    <text evidence="7">Transcriptionally regulated by PhoP.</text>
</comment>
<comment type="disruption phenotype">
    <text evidence="3">Deletion mutant retains WTA and ceases growth upon phosphate limitation (PubMed:27780866). Mutants show altered cell morphologies and effects on autolytic activity and antibiotic susceptibilities that, unexpectedly, also occur in phosphate-replete conditions (PubMed:27780866).</text>
</comment>
<comment type="similarity">
    <text evidence="6">Belongs to the glycerophosphoryl diester phosphodiesterase family.</text>
</comment>
<name>GLPQ_BACSU</name>
<evidence type="ECO:0000255" key="1"/>
<evidence type="ECO:0000255" key="2">
    <source>
        <dbReference type="PROSITE-ProRule" id="PRU01041"/>
    </source>
</evidence>
<evidence type="ECO:0000269" key="3">
    <source>
    </source>
</evidence>
<evidence type="ECO:0000303" key="4">
    <source>
    </source>
</evidence>
<evidence type="ECO:0000303" key="5">
    <source>
    </source>
</evidence>
<evidence type="ECO:0000305" key="6"/>
<evidence type="ECO:0000305" key="7">
    <source>
    </source>
</evidence>
<evidence type="ECO:0007744" key="8">
    <source>
        <dbReference type="PDB" id="5T91"/>
    </source>
</evidence>
<evidence type="ECO:0007744" key="9">
    <source>
        <dbReference type="PDB" id="5T9B"/>
    </source>
</evidence>
<evidence type="ECO:0007744" key="10">
    <source>
        <dbReference type="PDB" id="5T9C"/>
    </source>
</evidence>
<evidence type="ECO:0007829" key="11">
    <source>
        <dbReference type="PDB" id="5T9C"/>
    </source>
</evidence>
<dbReference type="EC" id="3.1.4.46" evidence="3"/>
<dbReference type="EMBL" id="Z26522">
    <property type="protein sequence ID" value="CAA81292.1"/>
    <property type="molecule type" value="Genomic_DNA"/>
</dbReference>
<dbReference type="EMBL" id="AB006424">
    <property type="protein sequence ID" value="BAA33110.1"/>
    <property type="molecule type" value="Genomic_DNA"/>
</dbReference>
<dbReference type="EMBL" id="AL009126">
    <property type="protein sequence ID" value="CAB12007.1"/>
    <property type="molecule type" value="Genomic_DNA"/>
</dbReference>
<dbReference type="PIR" id="I40418">
    <property type="entry name" value="I40418"/>
</dbReference>
<dbReference type="RefSeq" id="WP_003246382.1">
    <property type="nucleotide sequence ID" value="NZ_OZ025638.1"/>
</dbReference>
<dbReference type="PDB" id="5T91">
    <property type="method" value="X-ray"/>
    <property type="resolution" value="1.53 A"/>
    <property type="chains" value="A=27-293"/>
</dbReference>
<dbReference type="PDB" id="5T9B">
    <property type="method" value="X-ray"/>
    <property type="resolution" value="1.62 A"/>
    <property type="chains" value="G=27-293"/>
</dbReference>
<dbReference type="PDB" id="5T9C">
    <property type="method" value="X-ray"/>
    <property type="resolution" value="1.48 A"/>
    <property type="chains" value="E=27-293"/>
</dbReference>
<dbReference type="PDBsum" id="5T91"/>
<dbReference type="PDBsum" id="5T9B"/>
<dbReference type="PDBsum" id="5T9C"/>
<dbReference type="SMR" id="P37965"/>
<dbReference type="FunCoup" id="P37965">
    <property type="interactions" value="263"/>
</dbReference>
<dbReference type="IntAct" id="P37965">
    <property type="interactions" value="1"/>
</dbReference>
<dbReference type="STRING" id="224308.BSU02130"/>
<dbReference type="PaxDb" id="224308-BSU02130"/>
<dbReference type="EnsemblBacteria" id="CAB12007">
    <property type="protein sequence ID" value="CAB12007"/>
    <property type="gene ID" value="BSU_02130"/>
</dbReference>
<dbReference type="GeneID" id="938446"/>
<dbReference type="KEGG" id="bsu:BSU02130"/>
<dbReference type="PATRIC" id="fig|224308.179.peg.219"/>
<dbReference type="eggNOG" id="COG0584">
    <property type="taxonomic scope" value="Bacteria"/>
</dbReference>
<dbReference type="InParanoid" id="P37965"/>
<dbReference type="OrthoDB" id="384721at2"/>
<dbReference type="PhylomeDB" id="P37965"/>
<dbReference type="BioCyc" id="BSUB:BSU02130-MONOMER"/>
<dbReference type="Proteomes" id="UP000001570">
    <property type="component" value="Chromosome"/>
</dbReference>
<dbReference type="GO" id="GO:0005576">
    <property type="term" value="C:extracellular region"/>
    <property type="evidence" value="ECO:0007669"/>
    <property type="project" value="UniProtKB-SubCell"/>
</dbReference>
<dbReference type="GO" id="GO:0008889">
    <property type="term" value="F:glycerophosphodiester phosphodiesterase activity"/>
    <property type="evidence" value="ECO:0007669"/>
    <property type="project" value="UniProtKB-EC"/>
</dbReference>
<dbReference type="GO" id="GO:0046872">
    <property type="term" value="F:metal ion binding"/>
    <property type="evidence" value="ECO:0007669"/>
    <property type="project" value="UniProtKB-KW"/>
</dbReference>
<dbReference type="GO" id="GO:0071555">
    <property type="term" value="P:cell wall organization"/>
    <property type="evidence" value="ECO:0007669"/>
    <property type="project" value="UniProtKB-KW"/>
</dbReference>
<dbReference type="GO" id="GO:0006071">
    <property type="term" value="P:glycerol metabolic process"/>
    <property type="evidence" value="ECO:0007669"/>
    <property type="project" value="UniProtKB-KW"/>
</dbReference>
<dbReference type="GO" id="GO:0006629">
    <property type="term" value="P:lipid metabolic process"/>
    <property type="evidence" value="ECO:0007669"/>
    <property type="project" value="InterPro"/>
</dbReference>
<dbReference type="CDD" id="cd08601">
    <property type="entry name" value="GDPD_SaGlpQ_like"/>
    <property type="match status" value="1"/>
</dbReference>
<dbReference type="Gene3D" id="3.20.20.190">
    <property type="entry name" value="Phosphatidylinositol (PI) phosphodiesterase"/>
    <property type="match status" value="1"/>
</dbReference>
<dbReference type="InterPro" id="IPR030395">
    <property type="entry name" value="GP_PDE_dom"/>
</dbReference>
<dbReference type="InterPro" id="IPR017946">
    <property type="entry name" value="PLC-like_Pdiesterase_TIM-brl"/>
</dbReference>
<dbReference type="PANTHER" id="PTHR46211:SF7">
    <property type="entry name" value="GLYCEROPHOSPHODIESTER PHOSPHODIESTERASE"/>
    <property type="match status" value="1"/>
</dbReference>
<dbReference type="PANTHER" id="PTHR46211">
    <property type="entry name" value="GLYCEROPHOSPHORYL DIESTER PHOSPHODIESTERASE"/>
    <property type="match status" value="1"/>
</dbReference>
<dbReference type="Pfam" id="PF03009">
    <property type="entry name" value="GDPD"/>
    <property type="match status" value="1"/>
</dbReference>
<dbReference type="SUPFAM" id="SSF51695">
    <property type="entry name" value="PLC-like phosphodiesterases"/>
    <property type="match status" value="1"/>
</dbReference>
<dbReference type="PROSITE" id="PS51704">
    <property type="entry name" value="GP_PDE"/>
    <property type="match status" value="1"/>
</dbReference>
<gene>
    <name evidence="5" type="primary">glpQ</name>
    <name type="synonym">ybeD</name>
    <name type="ordered locus">BSU02130</name>
</gene>
<reference key="1">
    <citation type="journal article" date="1994" name="Microbiology">
        <title>The glpT and glpQ genes of the glycerol regulon in Bacillus subtilis.</title>
        <authorList>
            <person name="Nilsson R.P."/>
            <person name="Beijer L."/>
            <person name="Rutberg B."/>
        </authorList>
    </citation>
    <scope>NUCLEOTIDE SEQUENCE [GENOMIC DNA]</scope>
    <source>
        <strain>168 / BR95</strain>
    </source>
</reference>
<reference key="2">
    <citation type="submission" date="1997-07" db="EMBL/GenBank/DDBJ databases">
        <title>Sequence analysis of the 70kb region between 17 and 23 degree of the Bacillus subtilis chromosome.</title>
        <authorList>
            <person name="Haga K."/>
            <person name="Liu H."/>
            <person name="Yasumoto K."/>
            <person name="Takahashi H."/>
            <person name="Yoshikawa H."/>
        </authorList>
    </citation>
    <scope>NUCLEOTIDE SEQUENCE [GENOMIC DNA]</scope>
    <source>
        <strain>168</strain>
    </source>
</reference>
<reference key="3">
    <citation type="journal article" date="1997" name="Nature">
        <title>The complete genome sequence of the Gram-positive bacterium Bacillus subtilis.</title>
        <authorList>
            <person name="Kunst F."/>
            <person name="Ogasawara N."/>
            <person name="Moszer I."/>
            <person name="Albertini A.M."/>
            <person name="Alloni G."/>
            <person name="Azevedo V."/>
            <person name="Bertero M.G."/>
            <person name="Bessieres P."/>
            <person name="Bolotin A."/>
            <person name="Borchert S."/>
            <person name="Borriss R."/>
            <person name="Boursier L."/>
            <person name="Brans A."/>
            <person name="Braun M."/>
            <person name="Brignell S.C."/>
            <person name="Bron S."/>
            <person name="Brouillet S."/>
            <person name="Bruschi C.V."/>
            <person name="Caldwell B."/>
            <person name="Capuano V."/>
            <person name="Carter N.M."/>
            <person name="Choi S.-K."/>
            <person name="Codani J.-J."/>
            <person name="Connerton I.F."/>
            <person name="Cummings N.J."/>
            <person name="Daniel R.A."/>
            <person name="Denizot F."/>
            <person name="Devine K.M."/>
            <person name="Duesterhoeft A."/>
            <person name="Ehrlich S.D."/>
            <person name="Emmerson P.T."/>
            <person name="Entian K.-D."/>
            <person name="Errington J."/>
            <person name="Fabret C."/>
            <person name="Ferrari E."/>
            <person name="Foulger D."/>
            <person name="Fritz C."/>
            <person name="Fujita M."/>
            <person name="Fujita Y."/>
            <person name="Fuma S."/>
            <person name="Galizzi A."/>
            <person name="Galleron N."/>
            <person name="Ghim S.-Y."/>
            <person name="Glaser P."/>
            <person name="Goffeau A."/>
            <person name="Golightly E.J."/>
            <person name="Grandi G."/>
            <person name="Guiseppi G."/>
            <person name="Guy B.J."/>
            <person name="Haga K."/>
            <person name="Haiech J."/>
            <person name="Harwood C.R."/>
            <person name="Henaut A."/>
            <person name="Hilbert H."/>
            <person name="Holsappel S."/>
            <person name="Hosono S."/>
            <person name="Hullo M.-F."/>
            <person name="Itaya M."/>
            <person name="Jones L.-M."/>
            <person name="Joris B."/>
            <person name="Karamata D."/>
            <person name="Kasahara Y."/>
            <person name="Klaerr-Blanchard M."/>
            <person name="Klein C."/>
            <person name="Kobayashi Y."/>
            <person name="Koetter P."/>
            <person name="Koningstein G."/>
            <person name="Krogh S."/>
            <person name="Kumano M."/>
            <person name="Kurita K."/>
            <person name="Lapidus A."/>
            <person name="Lardinois S."/>
            <person name="Lauber J."/>
            <person name="Lazarevic V."/>
            <person name="Lee S.-M."/>
            <person name="Levine A."/>
            <person name="Liu H."/>
            <person name="Masuda S."/>
            <person name="Mauel C."/>
            <person name="Medigue C."/>
            <person name="Medina N."/>
            <person name="Mellado R.P."/>
            <person name="Mizuno M."/>
            <person name="Moestl D."/>
            <person name="Nakai S."/>
            <person name="Noback M."/>
            <person name="Noone D."/>
            <person name="O'Reilly M."/>
            <person name="Ogawa K."/>
            <person name="Ogiwara A."/>
            <person name="Oudega B."/>
            <person name="Park S.-H."/>
            <person name="Parro V."/>
            <person name="Pohl T.M."/>
            <person name="Portetelle D."/>
            <person name="Porwollik S."/>
            <person name="Prescott A.M."/>
            <person name="Presecan E."/>
            <person name="Pujic P."/>
            <person name="Purnelle B."/>
            <person name="Rapoport G."/>
            <person name="Rey M."/>
            <person name="Reynolds S."/>
            <person name="Rieger M."/>
            <person name="Rivolta C."/>
            <person name="Rocha E."/>
            <person name="Roche B."/>
            <person name="Rose M."/>
            <person name="Sadaie Y."/>
            <person name="Sato T."/>
            <person name="Scanlan E."/>
            <person name="Schleich S."/>
            <person name="Schroeter R."/>
            <person name="Scoffone F."/>
            <person name="Sekiguchi J."/>
            <person name="Sekowska A."/>
            <person name="Seror S.J."/>
            <person name="Serror P."/>
            <person name="Shin B.-S."/>
            <person name="Soldo B."/>
            <person name="Sorokin A."/>
            <person name="Tacconi E."/>
            <person name="Takagi T."/>
            <person name="Takahashi H."/>
            <person name="Takemaru K."/>
            <person name="Takeuchi M."/>
            <person name="Tamakoshi A."/>
            <person name="Tanaka T."/>
            <person name="Terpstra P."/>
            <person name="Tognoni A."/>
            <person name="Tosato V."/>
            <person name="Uchiyama S."/>
            <person name="Vandenbol M."/>
            <person name="Vannier F."/>
            <person name="Vassarotti A."/>
            <person name="Viari A."/>
            <person name="Wambutt R."/>
            <person name="Wedler E."/>
            <person name="Wedler H."/>
            <person name="Weitzenegger T."/>
            <person name="Winters P."/>
            <person name="Wipat A."/>
            <person name="Yamamoto H."/>
            <person name="Yamane K."/>
            <person name="Yasumoto K."/>
            <person name="Yata K."/>
            <person name="Yoshida K."/>
            <person name="Yoshikawa H.-F."/>
            <person name="Zumstein E."/>
            <person name="Yoshikawa H."/>
            <person name="Danchin A."/>
        </authorList>
    </citation>
    <scope>NUCLEOTIDE SEQUENCE [LARGE SCALE GENOMIC DNA]</scope>
    <source>
        <strain>168</strain>
    </source>
</reference>
<reference evidence="8 9 10" key="4">
    <citation type="journal article" date="2016" name="J. Biol. Chem.">
        <title>Identification of two phosphate starvation-induced wall teichoic acid hydrolases provides first insights into the degradative pathway of a key bacterial cell wall component.</title>
        <authorList>
            <person name="Myers C.L."/>
            <person name="Li F.K."/>
            <person name="Koo B.M."/>
            <person name="El-Halfawy O.M."/>
            <person name="French S."/>
            <person name="Gross C.A."/>
            <person name="Strynadka N.C."/>
            <person name="Brown E.D."/>
        </authorList>
    </citation>
    <scope>X-RAY CRYSTALLOGRAPHY (1.48 ANGSTROMS) OF 27-293 IN COMPLEXES WITH CALCIUM IONS AND SN-GLYCEROL 3-PHOSPHATE</scope>
    <scope>FUNCTION</scope>
    <scope>CATALYTIC ACTIVITY</scope>
    <scope>COFACTOR</scope>
    <scope>BIOPHYSICOCHEMICAL PROPERTIES</scope>
    <scope>DISRUPTION PHENOTYPE</scope>
    <scope>ACTIVE SITE</scope>
</reference>
<protein>
    <recommendedName>
        <fullName evidence="6">Glycerophosphodiester phosphodiesterase</fullName>
        <shortName evidence="6">Glycerophosphoryl diester phosphodiesterase</shortName>
        <ecNumber evidence="3">3.1.4.46</ecNumber>
    </recommendedName>
    <alternativeName>
        <fullName evidence="4">Teichoicase</fullName>
    </alternativeName>
</protein>
<accession>P37965</accession>
<proteinExistence type="evidence at protein level"/>
<keyword id="KW-0002">3D-structure</keyword>
<keyword id="KW-0106">Calcium</keyword>
<keyword id="KW-0961">Cell wall biogenesis/degradation</keyword>
<keyword id="KW-0319">Glycerol metabolism</keyword>
<keyword id="KW-0378">Hydrolase</keyword>
<keyword id="KW-0479">Metal-binding</keyword>
<keyword id="KW-1185">Reference proteome</keyword>
<keyword id="KW-0964">Secreted</keyword>
<keyword id="KW-0732">Signal</keyword>
<keyword id="KW-0346">Stress response</keyword>
<organism>
    <name type="scientific">Bacillus subtilis (strain 168)</name>
    <dbReference type="NCBI Taxonomy" id="224308"/>
    <lineage>
        <taxon>Bacteria</taxon>
        <taxon>Bacillati</taxon>
        <taxon>Bacillota</taxon>
        <taxon>Bacilli</taxon>
        <taxon>Bacillales</taxon>
        <taxon>Bacillaceae</taxon>
        <taxon>Bacillus</taxon>
    </lineage>
</organism>